<feature type="chain" id="PRO_1000146210" description="D-aminoacyl-tRNA deacylase">
    <location>
        <begin position="1"/>
        <end position="145"/>
    </location>
</feature>
<feature type="short sequence motif" description="Gly-cisPro motif, important for rejection of L-amino acids" evidence="1">
    <location>
        <begin position="137"/>
        <end position="138"/>
    </location>
</feature>
<name>DTD_SHEB2</name>
<sequence length="145" mass="15602">MIALIQRVSRASVVVDNQTIGAIDKGLLVLLGVEQQDTREKMEKLATKVMSYRVFSDENGKMNLNLEQVGGSLLVVSQFTLAADTGRGLRPSFSGAGTPDQALALYEEFVAFCRAKGVTTETGQFGADMQVSLVNDGPVTFNLQV</sequence>
<evidence type="ECO:0000255" key="1">
    <source>
        <dbReference type="HAMAP-Rule" id="MF_00518"/>
    </source>
</evidence>
<gene>
    <name evidence="1" type="primary">dtd</name>
    <name type="ordered locus">Sbal223_0323</name>
</gene>
<reference key="1">
    <citation type="submission" date="2008-12" db="EMBL/GenBank/DDBJ databases">
        <title>Complete sequence of chromosome of Shewanella baltica OS223.</title>
        <authorList>
            <consortium name="US DOE Joint Genome Institute"/>
            <person name="Lucas S."/>
            <person name="Copeland A."/>
            <person name="Lapidus A."/>
            <person name="Glavina del Rio T."/>
            <person name="Dalin E."/>
            <person name="Tice H."/>
            <person name="Bruce D."/>
            <person name="Goodwin L."/>
            <person name="Pitluck S."/>
            <person name="Chertkov O."/>
            <person name="Meincke L."/>
            <person name="Brettin T."/>
            <person name="Detter J.C."/>
            <person name="Han C."/>
            <person name="Kuske C.R."/>
            <person name="Larimer F."/>
            <person name="Land M."/>
            <person name="Hauser L."/>
            <person name="Kyrpides N."/>
            <person name="Ovchinnikova G."/>
            <person name="Brettar I."/>
            <person name="Rodrigues J."/>
            <person name="Konstantinidis K."/>
            <person name="Tiedje J."/>
        </authorList>
    </citation>
    <scope>NUCLEOTIDE SEQUENCE [LARGE SCALE GENOMIC DNA]</scope>
    <source>
        <strain>OS223</strain>
    </source>
</reference>
<proteinExistence type="inferred from homology"/>
<comment type="function">
    <text evidence="1">An aminoacyl-tRNA editing enzyme that deacylates mischarged D-aminoacyl-tRNAs. Also deacylates mischarged glycyl-tRNA(Ala), protecting cells against glycine mischarging by AlaRS. Acts via tRNA-based rather than protein-based catalysis; rejects L-amino acids rather than detecting D-amino acids in the active site. By recycling D-aminoacyl-tRNA to D-amino acids and free tRNA molecules, this enzyme counteracts the toxicity associated with the formation of D-aminoacyl-tRNA entities in vivo and helps enforce protein L-homochirality.</text>
</comment>
<comment type="catalytic activity">
    <reaction evidence="1">
        <text>glycyl-tRNA(Ala) + H2O = tRNA(Ala) + glycine + H(+)</text>
        <dbReference type="Rhea" id="RHEA:53744"/>
        <dbReference type="Rhea" id="RHEA-COMP:9657"/>
        <dbReference type="Rhea" id="RHEA-COMP:13640"/>
        <dbReference type="ChEBI" id="CHEBI:15377"/>
        <dbReference type="ChEBI" id="CHEBI:15378"/>
        <dbReference type="ChEBI" id="CHEBI:57305"/>
        <dbReference type="ChEBI" id="CHEBI:78442"/>
        <dbReference type="ChEBI" id="CHEBI:78522"/>
        <dbReference type="EC" id="3.1.1.96"/>
    </reaction>
</comment>
<comment type="catalytic activity">
    <reaction evidence="1">
        <text>a D-aminoacyl-tRNA + H2O = a tRNA + a D-alpha-amino acid + H(+)</text>
        <dbReference type="Rhea" id="RHEA:13953"/>
        <dbReference type="Rhea" id="RHEA-COMP:10123"/>
        <dbReference type="Rhea" id="RHEA-COMP:10124"/>
        <dbReference type="ChEBI" id="CHEBI:15377"/>
        <dbReference type="ChEBI" id="CHEBI:15378"/>
        <dbReference type="ChEBI" id="CHEBI:59871"/>
        <dbReference type="ChEBI" id="CHEBI:78442"/>
        <dbReference type="ChEBI" id="CHEBI:79333"/>
        <dbReference type="EC" id="3.1.1.96"/>
    </reaction>
</comment>
<comment type="subunit">
    <text evidence="1">Homodimer.</text>
</comment>
<comment type="subcellular location">
    <subcellularLocation>
        <location evidence="1">Cytoplasm</location>
    </subcellularLocation>
</comment>
<comment type="domain">
    <text evidence="1">A Gly-cisPro motif from one monomer fits into the active site of the other monomer to allow specific chiral rejection of L-amino acids.</text>
</comment>
<comment type="similarity">
    <text evidence="1">Belongs to the DTD family.</text>
</comment>
<dbReference type="EC" id="3.1.1.96" evidence="1"/>
<dbReference type="EMBL" id="CP001252">
    <property type="protein sequence ID" value="ACK44859.1"/>
    <property type="molecule type" value="Genomic_DNA"/>
</dbReference>
<dbReference type="RefSeq" id="WP_011982175.1">
    <property type="nucleotide sequence ID" value="NC_011663.1"/>
</dbReference>
<dbReference type="SMR" id="B8E4B8"/>
<dbReference type="KEGG" id="sbp:Sbal223_0323"/>
<dbReference type="HOGENOM" id="CLU_076901_1_0_6"/>
<dbReference type="Proteomes" id="UP000002507">
    <property type="component" value="Chromosome"/>
</dbReference>
<dbReference type="GO" id="GO:0005737">
    <property type="term" value="C:cytoplasm"/>
    <property type="evidence" value="ECO:0007669"/>
    <property type="project" value="UniProtKB-SubCell"/>
</dbReference>
<dbReference type="GO" id="GO:0051500">
    <property type="term" value="F:D-tyrosyl-tRNA(Tyr) deacylase activity"/>
    <property type="evidence" value="ECO:0007669"/>
    <property type="project" value="TreeGrafter"/>
</dbReference>
<dbReference type="GO" id="GO:0106026">
    <property type="term" value="F:Gly-tRNA(Ala) deacylase activity"/>
    <property type="evidence" value="ECO:0007669"/>
    <property type="project" value="UniProtKB-UniRule"/>
</dbReference>
<dbReference type="GO" id="GO:0043908">
    <property type="term" value="F:Ser(Gly)-tRNA(Ala) hydrolase activity"/>
    <property type="evidence" value="ECO:0007669"/>
    <property type="project" value="UniProtKB-UniRule"/>
</dbReference>
<dbReference type="GO" id="GO:0000049">
    <property type="term" value="F:tRNA binding"/>
    <property type="evidence" value="ECO:0007669"/>
    <property type="project" value="UniProtKB-UniRule"/>
</dbReference>
<dbReference type="GO" id="GO:0019478">
    <property type="term" value="P:D-amino acid catabolic process"/>
    <property type="evidence" value="ECO:0007669"/>
    <property type="project" value="UniProtKB-UniRule"/>
</dbReference>
<dbReference type="CDD" id="cd00563">
    <property type="entry name" value="Dtyr_deacylase"/>
    <property type="match status" value="1"/>
</dbReference>
<dbReference type="FunFam" id="3.50.80.10:FF:000001">
    <property type="entry name" value="D-aminoacyl-tRNA deacylase"/>
    <property type="match status" value="1"/>
</dbReference>
<dbReference type="Gene3D" id="3.50.80.10">
    <property type="entry name" value="D-tyrosyl-tRNA(Tyr) deacylase"/>
    <property type="match status" value="1"/>
</dbReference>
<dbReference type="HAMAP" id="MF_00518">
    <property type="entry name" value="Deacylase_Dtd"/>
    <property type="match status" value="1"/>
</dbReference>
<dbReference type="InterPro" id="IPR003732">
    <property type="entry name" value="Daa-tRNA_deacyls_DTD"/>
</dbReference>
<dbReference type="InterPro" id="IPR023509">
    <property type="entry name" value="DTD-like_sf"/>
</dbReference>
<dbReference type="NCBIfam" id="TIGR00256">
    <property type="entry name" value="D-aminoacyl-tRNA deacylase"/>
    <property type="match status" value="1"/>
</dbReference>
<dbReference type="PANTHER" id="PTHR10472:SF5">
    <property type="entry name" value="D-AMINOACYL-TRNA DEACYLASE 1"/>
    <property type="match status" value="1"/>
</dbReference>
<dbReference type="PANTHER" id="PTHR10472">
    <property type="entry name" value="D-TYROSYL-TRNA TYR DEACYLASE"/>
    <property type="match status" value="1"/>
</dbReference>
<dbReference type="Pfam" id="PF02580">
    <property type="entry name" value="Tyr_Deacylase"/>
    <property type="match status" value="1"/>
</dbReference>
<dbReference type="SUPFAM" id="SSF69500">
    <property type="entry name" value="DTD-like"/>
    <property type="match status" value="1"/>
</dbReference>
<accession>B8E4B8</accession>
<keyword id="KW-0963">Cytoplasm</keyword>
<keyword id="KW-0378">Hydrolase</keyword>
<keyword id="KW-0694">RNA-binding</keyword>
<keyword id="KW-0820">tRNA-binding</keyword>
<protein>
    <recommendedName>
        <fullName evidence="1">D-aminoacyl-tRNA deacylase</fullName>
        <shortName evidence="1">DTD</shortName>
        <ecNumber evidence="1">3.1.1.96</ecNumber>
    </recommendedName>
    <alternativeName>
        <fullName evidence="1">Gly-tRNA(Ala) deacylase</fullName>
    </alternativeName>
</protein>
<organism>
    <name type="scientific">Shewanella baltica (strain OS223)</name>
    <dbReference type="NCBI Taxonomy" id="407976"/>
    <lineage>
        <taxon>Bacteria</taxon>
        <taxon>Pseudomonadati</taxon>
        <taxon>Pseudomonadota</taxon>
        <taxon>Gammaproteobacteria</taxon>
        <taxon>Alteromonadales</taxon>
        <taxon>Shewanellaceae</taxon>
        <taxon>Shewanella</taxon>
    </lineage>
</organism>